<evidence type="ECO:0000255" key="1">
    <source>
        <dbReference type="HAMAP-Rule" id="MF_01201"/>
    </source>
</evidence>
<dbReference type="EC" id="5.1.1.1" evidence="1"/>
<dbReference type="EMBL" id="CP000269">
    <property type="protein sequence ID" value="ABR88832.1"/>
    <property type="molecule type" value="Genomic_DNA"/>
</dbReference>
<dbReference type="RefSeq" id="WP_012079380.1">
    <property type="nucleotide sequence ID" value="NC_009659.1"/>
</dbReference>
<dbReference type="SMR" id="A6SY68"/>
<dbReference type="STRING" id="375286.mma_1525"/>
<dbReference type="KEGG" id="mms:mma_1525"/>
<dbReference type="eggNOG" id="COG0787">
    <property type="taxonomic scope" value="Bacteria"/>
</dbReference>
<dbReference type="HOGENOM" id="CLU_028393_1_0_4"/>
<dbReference type="OrthoDB" id="9813814at2"/>
<dbReference type="UniPathway" id="UPA00042">
    <property type="reaction ID" value="UER00497"/>
</dbReference>
<dbReference type="Proteomes" id="UP000006388">
    <property type="component" value="Chromosome"/>
</dbReference>
<dbReference type="GO" id="GO:0005829">
    <property type="term" value="C:cytosol"/>
    <property type="evidence" value="ECO:0007669"/>
    <property type="project" value="TreeGrafter"/>
</dbReference>
<dbReference type="GO" id="GO:0008784">
    <property type="term" value="F:alanine racemase activity"/>
    <property type="evidence" value="ECO:0007669"/>
    <property type="project" value="UniProtKB-UniRule"/>
</dbReference>
<dbReference type="GO" id="GO:0030170">
    <property type="term" value="F:pyridoxal phosphate binding"/>
    <property type="evidence" value="ECO:0007669"/>
    <property type="project" value="UniProtKB-UniRule"/>
</dbReference>
<dbReference type="GO" id="GO:0030632">
    <property type="term" value="P:D-alanine biosynthetic process"/>
    <property type="evidence" value="ECO:0007669"/>
    <property type="project" value="UniProtKB-UniRule"/>
</dbReference>
<dbReference type="CDD" id="cd06827">
    <property type="entry name" value="PLPDE_III_AR_proteobact"/>
    <property type="match status" value="1"/>
</dbReference>
<dbReference type="FunFam" id="3.20.20.10:FF:000002">
    <property type="entry name" value="Alanine racemase"/>
    <property type="match status" value="1"/>
</dbReference>
<dbReference type="Gene3D" id="3.20.20.10">
    <property type="entry name" value="Alanine racemase"/>
    <property type="match status" value="1"/>
</dbReference>
<dbReference type="Gene3D" id="2.40.37.10">
    <property type="entry name" value="Lyase, Ornithine Decarboxylase, Chain A, domain 1"/>
    <property type="match status" value="1"/>
</dbReference>
<dbReference type="HAMAP" id="MF_01201">
    <property type="entry name" value="Ala_racemase"/>
    <property type="match status" value="1"/>
</dbReference>
<dbReference type="InterPro" id="IPR000821">
    <property type="entry name" value="Ala_racemase"/>
</dbReference>
<dbReference type="InterPro" id="IPR009006">
    <property type="entry name" value="Ala_racemase/Decarboxylase_C"/>
</dbReference>
<dbReference type="InterPro" id="IPR011079">
    <property type="entry name" value="Ala_racemase_C"/>
</dbReference>
<dbReference type="InterPro" id="IPR001608">
    <property type="entry name" value="Ala_racemase_N"/>
</dbReference>
<dbReference type="InterPro" id="IPR020622">
    <property type="entry name" value="Ala_racemase_pyridoxalP-BS"/>
</dbReference>
<dbReference type="InterPro" id="IPR029066">
    <property type="entry name" value="PLP-binding_barrel"/>
</dbReference>
<dbReference type="NCBIfam" id="TIGR00492">
    <property type="entry name" value="alr"/>
    <property type="match status" value="1"/>
</dbReference>
<dbReference type="PANTHER" id="PTHR30511">
    <property type="entry name" value="ALANINE RACEMASE"/>
    <property type="match status" value="1"/>
</dbReference>
<dbReference type="PANTHER" id="PTHR30511:SF0">
    <property type="entry name" value="ALANINE RACEMASE, CATABOLIC-RELATED"/>
    <property type="match status" value="1"/>
</dbReference>
<dbReference type="Pfam" id="PF00842">
    <property type="entry name" value="Ala_racemase_C"/>
    <property type="match status" value="1"/>
</dbReference>
<dbReference type="Pfam" id="PF01168">
    <property type="entry name" value="Ala_racemase_N"/>
    <property type="match status" value="1"/>
</dbReference>
<dbReference type="PRINTS" id="PR00992">
    <property type="entry name" value="ALARACEMASE"/>
</dbReference>
<dbReference type="SMART" id="SM01005">
    <property type="entry name" value="Ala_racemase_C"/>
    <property type="match status" value="1"/>
</dbReference>
<dbReference type="SUPFAM" id="SSF50621">
    <property type="entry name" value="Alanine racemase C-terminal domain-like"/>
    <property type="match status" value="1"/>
</dbReference>
<dbReference type="SUPFAM" id="SSF51419">
    <property type="entry name" value="PLP-binding barrel"/>
    <property type="match status" value="1"/>
</dbReference>
<dbReference type="PROSITE" id="PS00395">
    <property type="entry name" value="ALANINE_RACEMASE"/>
    <property type="match status" value="1"/>
</dbReference>
<name>ALR_JANMA</name>
<keyword id="KW-0413">Isomerase</keyword>
<keyword id="KW-0663">Pyridoxal phosphate</keyword>
<organism>
    <name type="scientific">Janthinobacterium sp. (strain Marseille)</name>
    <name type="common">Minibacterium massiliensis</name>
    <dbReference type="NCBI Taxonomy" id="375286"/>
    <lineage>
        <taxon>Bacteria</taxon>
        <taxon>Pseudomonadati</taxon>
        <taxon>Pseudomonadota</taxon>
        <taxon>Betaproteobacteria</taxon>
        <taxon>Burkholderiales</taxon>
        <taxon>Oxalobacteraceae</taxon>
        <taxon>Janthinobacterium</taxon>
    </lineage>
</organism>
<reference key="1">
    <citation type="journal article" date="2007" name="PLoS Genet.">
        <title>Genome analysis of Minibacterium massiliensis highlights the convergent evolution of water-living bacteria.</title>
        <authorList>
            <person name="Audic S."/>
            <person name="Robert C."/>
            <person name="Campagna B."/>
            <person name="Parinello H."/>
            <person name="Claverie J.-M."/>
            <person name="Raoult D."/>
            <person name="Drancourt M."/>
        </authorList>
    </citation>
    <scope>NUCLEOTIDE SEQUENCE [LARGE SCALE GENOMIC DNA]</scope>
    <source>
        <strain>Marseille</strain>
    </source>
</reference>
<gene>
    <name type="primary">alr</name>
    <name type="ordered locus">mma_1525</name>
</gene>
<comment type="function">
    <text evidence="1">Catalyzes the interconversion of L-alanine and D-alanine. May also act on other amino acids.</text>
</comment>
<comment type="catalytic activity">
    <reaction evidence="1">
        <text>L-alanine = D-alanine</text>
        <dbReference type="Rhea" id="RHEA:20249"/>
        <dbReference type="ChEBI" id="CHEBI:57416"/>
        <dbReference type="ChEBI" id="CHEBI:57972"/>
        <dbReference type="EC" id="5.1.1.1"/>
    </reaction>
</comment>
<comment type="cofactor">
    <cofactor evidence="1">
        <name>pyridoxal 5'-phosphate</name>
        <dbReference type="ChEBI" id="CHEBI:597326"/>
    </cofactor>
</comment>
<comment type="pathway">
    <text evidence="1">Amino-acid biosynthesis; D-alanine biosynthesis; D-alanine from L-alanine: step 1/1.</text>
</comment>
<comment type="similarity">
    <text evidence="1">Belongs to the alanine racemase family.</text>
</comment>
<proteinExistence type="inferred from homology"/>
<sequence length="359" mass="38615">MPRPLIATIDIAALRSNLALAKARAPHSKAWAVVKANAYGHGLERGMRGFAAADGLGLIELDAAARLRELGWNKRILLLEGFFDASDTKLLAEHRLDTVIHCEEQLLMLEQAKLRTQIDVHLKLNSGMNRLGFTPARYRAAYERLRAIPAVRHISFVTHFANAEDPDNPVLPVQEQVRRFKEATRDLPGEKSLANSATDLLHPAAAADWIRPGIMLYGATPGAQSAEQFGLRAAMSLHSEIIGVQHIVAGDAVGYGSAFVATAPMTIGVVACGYADGYPRHAPSGTPVIVDGVKTRMVGRVSMDMITVDLTPVAKPRIGSKVTLWGASLPIDEVANAAGTVGYELMCGLAPRVQIVEVN</sequence>
<feature type="chain" id="PRO_1000065994" description="Alanine racemase">
    <location>
        <begin position="1"/>
        <end position="359"/>
    </location>
</feature>
<feature type="active site" description="Proton acceptor; specific for D-alanine" evidence="1">
    <location>
        <position position="35"/>
    </location>
</feature>
<feature type="active site" description="Proton acceptor; specific for L-alanine" evidence="1">
    <location>
        <position position="255"/>
    </location>
</feature>
<feature type="binding site" evidence="1">
    <location>
        <position position="130"/>
    </location>
    <ligand>
        <name>substrate</name>
    </ligand>
</feature>
<feature type="binding site" evidence="1">
    <location>
        <position position="303"/>
    </location>
    <ligand>
        <name>substrate</name>
    </ligand>
</feature>
<feature type="modified residue" description="N6-(pyridoxal phosphate)lysine" evidence="1">
    <location>
        <position position="35"/>
    </location>
</feature>
<accession>A6SY68</accession>
<protein>
    <recommendedName>
        <fullName evidence="1">Alanine racemase</fullName>
        <ecNumber evidence="1">5.1.1.1</ecNumber>
    </recommendedName>
</protein>